<feature type="transit peptide" description="Chloroplast" evidence="1">
    <location>
        <begin position="1"/>
        <end position="70"/>
    </location>
</feature>
<feature type="chain" id="PRO_0000398869" description="Lipoyl synthase, chloroplastic">
    <location>
        <begin position="71"/>
        <end position="364"/>
    </location>
</feature>
<feature type="domain" description="Radical SAM core" evidence="2">
    <location>
        <begin position="109"/>
        <end position="330"/>
    </location>
</feature>
<feature type="region of interest" description="Disordered" evidence="3">
    <location>
        <begin position="32"/>
        <end position="64"/>
    </location>
</feature>
<feature type="compositionally biased region" description="Low complexity" evidence="3">
    <location>
        <begin position="32"/>
        <end position="52"/>
    </location>
</feature>
<feature type="binding site" evidence="1">
    <location>
        <position position="95"/>
    </location>
    <ligand>
        <name>[4Fe-4S] cluster</name>
        <dbReference type="ChEBI" id="CHEBI:49883"/>
        <label>1</label>
    </ligand>
</feature>
<feature type="binding site" evidence="1">
    <location>
        <position position="100"/>
    </location>
    <ligand>
        <name>[4Fe-4S] cluster</name>
        <dbReference type="ChEBI" id="CHEBI:49883"/>
        <label>1</label>
    </ligand>
</feature>
<feature type="binding site" evidence="1">
    <location>
        <position position="106"/>
    </location>
    <ligand>
        <name>[4Fe-4S] cluster</name>
        <dbReference type="ChEBI" id="CHEBI:49883"/>
        <label>1</label>
    </ligand>
</feature>
<feature type="binding site" evidence="1">
    <location>
        <position position="126"/>
    </location>
    <ligand>
        <name>[4Fe-4S] cluster</name>
        <dbReference type="ChEBI" id="CHEBI:49883"/>
        <label>2</label>
        <note>4Fe-4S-S-AdoMet</note>
    </ligand>
</feature>
<feature type="binding site" evidence="1">
    <location>
        <position position="130"/>
    </location>
    <ligand>
        <name>[4Fe-4S] cluster</name>
        <dbReference type="ChEBI" id="CHEBI:49883"/>
        <label>2</label>
        <note>4Fe-4S-S-AdoMet</note>
    </ligand>
</feature>
<feature type="binding site" evidence="1">
    <location>
        <position position="133"/>
    </location>
    <ligand>
        <name>[4Fe-4S] cluster</name>
        <dbReference type="ChEBI" id="CHEBI:49883"/>
        <label>2</label>
        <note>4Fe-4S-S-AdoMet</note>
    </ligand>
</feature>
<feature type="binding site" evidence="1">
    <location>
        <position position="341"/>
    </location>
    <ligand>
        <name>[4Fe-4S] cluster</name>
        <dbReference type="ChEBI" id="CHEBI:49883"/>
        <label>1</label>
    </ligand>
</feature>
<proteinExistence type="inferred from homology"/>
<evidence type="ECO:0000255" key="1">
    <source>
        <dbReference type="HAMAP-Rule" id="MF_03129"/>
    </source>
</evidence>
<evidence type="ECO:0000255" key="2">
    <source>
        <dbReference type="PROSITE-ProRule" id="PRU01266"/>
    </source>
</evidence>
<evidence type="ECO:0000256" key="3">
    <source>
        <dbReference type="SAM" id="MobiDB-lite"/>
    </source>
</evidence>
<comment type="function">
    <text evidence="1">Catalyzes the radical-mediated insertion of two sulfur atoms into the C-6 and C-8 positions of the octanoyl moiety bound to the lipoyl domains of lipoate-dependent enzymes, thereby converting the octanoylated domains into lipoylated derivatives.</text>
</comment>
<comment type="catalytic activity">
    <reaction evidence="1">
        <text>[[Fe-S] cluster scaffold protein carrying a second [4Fe-4S](2+) cluster] + N(6)-octanoyl-L-lysyl-[protein] + 2 oxidized [2Fe-2S]-[ferredoxin] + 2 S-adenosyl-L-methionine + 4 H(+) = [[Fe-S] cluster scaffold protein] + N(6)-[(R)-dihydrolipoyl]-L-lysyl-[protein] + 4 Fe(3+) + 2 hydrogen sulfide + 2 5'-deoxyadenosine + 2 L-methionine + 2 reduced [2Fe-2S]-[ferredoxin]</text>
        <dbReference type="Rhea" id="RHEA:16585"/>
        <dbReference type="Rhea" id="RHEA-COMP:9928"/>
        <dbReference type="Rhea" id="RHEA-COMP:10000"/>
        <dbReference type="Rhea" id="RHEA-COMP:10001"/>
        <dbReference type="Rhea" id="RHEA-COMP:10475"/>
        <dbReference type="Rhea" id="RHEA-COMP:14568"/>
        <dbReference type="Rhea" id="RHEA-COMP:14569"/>
        <dbReference type="ChEBI" id="CHEBI:15378"/>
        <dbReference type="ChEBI" id="CHEBI:17319"/>
        <dbReference type="ChEBI" id="CHEBI:29034"/>
        <dbReference type="ChEBI" id="CHEBI:29919"/>
        <dbReference type="ChEBI" id="CHEBI:33722"/>
        <dbReference type="ChEBI" id="CHEBI:33737"/>
        <dbReference type="ChEBI" id="CHEBI:33738"/>
        <dbReference type="ChEBI" id="CHEBI:57844"/>
        <dbReference type="ChEBI" id="CHEBI:59789"/>
        <dbReference type="ChEBI" id="CHEBI:78809"/>
        <dbReference type="ChEBI" id="CHEBI:83100"/>
        <dbReference type="EC" id="2.8.1.8"/>
    </reaction>
</comment>
<comment type="cofactor">
    <cofactor evidence="1">
        <name>[4Fe-4S] cluster</name>
        <dbReference type="ChEBI" id="CHEBI:49883"/>
    </cofactor>
    <text evidence="1">Binds 2 [4Fe-4S] clusters per subunit. One cluster is coordinated with 3 cysteines and an exchangeable S-adenosyl-L-methionine.</text>
</comment>
<comment type="pathway">
    <text evidence="1">Protein modification; protein lipoylation via endogenous pathway; protein N(6)-(lipoyl)lysine from octanoyl-[acyl-carrier-protein]: step 2/2.</text>
</comment>
<comment type="subcellular location">
    <subcellularLocation>
        <location evidence="1">Plastid</location>
        <location evidence="1">Chloroplast</location>
    </subcellularLocation>
</comment>
<comment type="similarity">
    <text evidence="1">Belongs to the radical SAM superfamily. Lipoyl synthase family.</text>
</comment>
<keyword id="KW-0004">4Fe-4S</keyword>
<keyword id="KW-0150">Chloroplast</keyword>
<keyword id="KW-0408">Iron</keyword>
<keyword id="KW-0411">Iron-sulfur</keyword>
<keyword id="KW-0479">Metal-binding</keyword>
<keyword id="KW-0934">Plastid</keyword>
<keyword id="KW-1185">Reference proteome</keyword>
<keyword id="KW-0949">S-adenosyl-L-methionine</keyword>
<keyword id="KW-0808">Transferase</keyword>
<keyword id="KW-0809">Transit peptide</keyword>
<sequence length="364" mass="40304">MEQTLFNPSISMPKSFYHKHITISSRIQCQLSTNSPSSNTKTTTVTVPSKKTMGPYTGRDPNVKKPEWLRQRAPQGERFQEVKHSLSSLKLNTVCEEAQCPNIGECWNGGGDGIATATIMLLGDTCTRGCRFCAVKTSRNPSPPDPLEPQNTALAIASWGVDYIVLTSVDRDDLPDGGSGHFSETVQAMKKLKPEIMVECLTSDFRGDLEAVETLVHSGLDVFAHNIETVKRLQRIVRDPRAGYEQSLSVLKHAKHSKEGMITKSSIMLGLGETDDELKEAMADLRAIDVDILTLGQYLQPTPLHLTVKEYVTPEKFAFWKEYGESIGFRYVASGPMVRSSYRAGELFVKTMVKERSSNSAAKP</sequence>
<name>LISC_RICCO</name>
<reference key="1">
    <citation type="journal article" date="2010" name="Nat. Biotechnol.">
        <title>Draft genome sequence of the oilseed species Ricinus communis.</title>
        <authorList>
            <person name="Chan A.P."/>
            <person name="Crabtree J."/>
            <person name="Zhao Q."/>
            <person name="Lorenzi H."/>
            <person name="Orvis J."/>
            <person name="Puiu D."/>
            <person name="Melake-Berhan A."/>
            <person name="Jones K.M."/>
            <person name="Redman J."/>
            <person name="Chen G."/>
            <person name="Cahoon E.B."/>
            <person name="Gedil M."/>
            <person name="Stanke M."/>
            <person name="Haas B.J."/>
            <person name="Wortman J.R."/>
            <person name="Fraser-Liggett C.M."/>
            <person name="Ravel J."/>
            <person name="Rabinowicz P.D."/>
        </authorList>
    </citation>
    <scope>NUCLEOTIDE SEQUENCE [LARGE SCALE GENOMIC DNA]</scope>
    <source>
        <strain>cv. Hale</strain>
    </source>
</reference>
<dbReference type="EC" id="2.8.1.8" evidence="1"/>
<dbReference type="EMBL" id="EQ973826">
    <property type="protein sequence ID" value="EEF44086.1"/>
    <property type="molecule type" value="Genomic_DNA"/>
</dbReference>
<dbReference type="SMR" id="B9RX57"/>
<dbReference type="FunCoup" id="B9RX57">
    <property type="interactions" value="2105"/>
</dbReference>
<dbReference type="STRING" id="3988.B9RX57"/>
<dbReference type="GeneID" id="8279195"/>
<dbReference type="KEGG" id="rcu:8279195"/>
<dbReference type="eggNOG" id="KOG2672">
    <property type="taxonomic scope" value="Eukaryota"/>
</dbReference>
<dbReference type="InParanoid" id="B9RX57"/>
<dbReference type="OMA" id="RSCAFCQ"/>
<dbReference type="OrthoDB" id="3231at2759"/>
<dbReference type="UniPathway" id="UPA00538">
    <property type="reaction ID" value="UER00593"/>
</dbReference>
<dbReference type="Proteomes" id="UP000008311">
    <property type="component" value="Unassembled WGS sequence"/>
</dbReference>
<dbReference type="GO" id="GO:0009507">
    <property type="term" value="C:chloroplast"/>
    <property type="evidence" value="ECO:0007669"/>
    <property type="project" value="UniProtKB-SubCell"/>
</dbReference>
<dbReference type="GO" id="GO:0005739">
    <property type="term" value="C:mitochondrion"/>
    <property type="evidence" value="ECO:0000318"/>
    <property type="project" value="GO_Central"/>
</dbReference>
<dbReference type="GO" id="GO:0051539">
    <property type="term" value="F:4 iron, 4 sulfur cluster binding"/>
    <property type="evidence" value="ECO:0007669"/>
    <property type="project" value="UniProtKB-UniRule"/>
</dbReference>
<dbReference type="GO" id="GO:0016992">
    <property type="term" value="F:lipoate synthase activity"/>
    <property type="evidence" value="ECO:0000318"/>
    <property type="project" value="GO_Central"/>
</dbReference>
<dbReference type="GO" id="GO:0046872">
    <property type="term" value="F:metal ion binding"/>
    <property type="evidence" value="ECO:0007669"/>
    <property type="project" value="UniProtKB-KW"/>
</dbReference>
<dbReference type="GO" id="GO:0009107">
    <property type="term" value="P:lipoate biosynthetic process"/>
    <property type="evidence" value="ECO:0000318"/>
    <property type="project" value="GO_Central"/>
</dbReference>
<dbReference type="CDD" id="cd01335">
    <property type="entry name" value="Radical_SAM"/>
    <property type="match status" value="1"/>
</dbReference>
<dbReference type="FunFam" id="3.20.20.70:FF:000036">
    <property type="entry name" value="Lipoyl synthase, mitochondrial"/>
    <property type="match status" value="1"/>
</dbReference>
<dbReference type="Gene3D" id="3.20.20.70">
    <property type="entry name" value="Aldolase class I"/>
    <property type="match status" value="1"/>
</dbReference>
<dbReference type="HAMAP" id="MF_00206">
    <property type="entry name" value="Lipoyl_synth"/>
    <property type="match status" value="1"/>
</dbReference>
<dbReference type="HAMAP" id="MF_03129">
    <property type="entry name" value="Lipoyl_synth_plantC"/>
    <property type="match status" value="1"/>
</dbReference>
<dbReference type="InterPro" id="IPR013785">
    <property type="entry name" value="Aldolase_TIM"/>
</dbReference>
<dbReference type="InterPro" id="IPR006638">
    <property type="entry name" value="Elp3/MiaA/NifB-like_rSAM"/>
</dbReference>
<dbReference type="InterPro" id="IPR031691">
    <property type="entry name" value="LIAS_N"/>
</dbReference>
<dbReference type="InterPro" id="IPR003698">
    <property type="entry name" value="Lipoyl_synth"/>
</dbReference>
<dbReference type="InterPro" id="IPR027526">
    <property type="entry name" value="Lipoyl_synth_chlpt"/>
</dbReference>
<dbReference type="InterPro" id="IPR007197">
    <property type="entry name" value="rSAM"/>
</dbReference>
<dbReference type="NCBIfam" id="TIGR00510">
    <property type="entry name" value="lipA"/>
    <property type="match status" value="1"/>
</dbReference>
<dbReference type="NCBIfam" id="NF004019">
    <property type="entry name" value="PRK05481.1"/>
    <property type="match status" value="1"/>
</dbReference>
<dbReference type="NCBIfam" id="NF009544">
    <property type="entry name" value="PRK12928.1"/>
    <property type="match status" value="1"/>
</dbReference>
<dbReference type="PANTHER" id="PTHR10949">
    <property type="entry name" value="LIPOYL SYNTHASE"/>
    <property type="match status" value="1"/>
</dbReference>
<dbReference type="PANTHER" id="PTHR10949:SF38">
    <property type="entry name" value="LIPOYL SYNTHASE, CHLOROPLASTIC"/>
    <property type="match status" value="1"/>
</dbReference>
<dbReference type="Pfam" id="PF16881">
    <property type="entry name" value="LIAS_N"/>
    <property type="match status" value="1"/>
</dbReference>
<dbReference type="Pfam" id="PF04055">
    <property type="entry name" value="Radical_SAM"/>
    <property type="match status" value="1"/>
</dbReference>
<dbReference type="PIRSF" id="PIRSF005963">
    <property type="entry name" value="Lipoyl_synth"/>
    <property type="match status" value="1"/>
</dbReference>
<dbReference type="SFLD" id="SFLDF00271">
    <property type="entry name" value="lipoyl_synthase"/>
    <property type="match status" value="1"/>
</dbReference>
<dbReference type="SFLD" id="SFLDS00029">
    <property type="entry name" value="Radical_SAM"/>
    <property type="match status" value="1"/>
</dbReference>
<dbReference type="SMART" id="SM00729">
    <property type="entry name" value="Elp3"/>
    <property type="match status" value="1"/>
</dbReference>
<dbReference type="SUPFAM" id="SSF102114">
    <property type="entry name" value="Radical SAM enzymes"/>
    <property type="match status" value="1"/>
</dbReference>
<dbReference type="PROSITE" id="PS51918">
    <property type="entry name" value="RADICAL_SAM"/>
    <property type="match status" value="1"/>
</dbReference>
<gene>
    <name evidence="1" type="primary">LIP1P</name>
    <name type="ORF">RCOM_0817880</name>
</gene>
<accession>B9RX57</accession>
<protein>
    <recommendedName>
        <fullName evidence="1">Lipoyl synthase, chloroplastic</fullName>
        <ecNumber evidence="1">2.8.1.8</ecNumber>
    </recommendedName>
    <alternativeName>
        <fullName evidence="1">Lipoate synthase</fullName>
        <shortName evidence="1">LS</shortName>
        <shortName evidence="1">Lip-syn</shortName>
    </alternativeName>
    <alternativeName>
        <fullName evidence="1">Lipoate synthase, plastidial</fullName>
        <shortName evidence="1">LIP1p</shortName>
    </alternativeName>
    <alternativeName>
        <fullName evidence="1">Lipoic acid synthase</fullName>
    </alternativeName>
</protein>
<organism>
    <name type="scientific">Ricinus communis</name>
    <name type="common">Castor bean</name>
    <dbReference type="NCBI Taxonomy" id="3988"/>
    <lineage>
        <taxon>Eukaryota</taxon>
        <taxon>Viridiplantae</taxon>
        <taxon>Streptophyta</taxon>
        <taxon>Embryophyta</taxon>
        <taxon>Tracheophyta</taxon>
        <taxon>Spermatophyta</taxon>
        <taxon>Magnoliopsida</taxon>
        <taxon>eudicotyledons</taxon>
        <taxon>Gunneridae</taxon>
        <taxon>Pentapetalae</taxon>
        <taxon>rosids</taxon>
        <taxon>fabids</taxon>
        <taxon>Malpighiales</taxon>
        <taxon>Euphorbiaceae</taxon>
        <taxon>Acalyphoideae</taxon>
        <taxon>Acalypheae</taxon>
        <taxon>Ricinus</taxon>
    </lineage>
</organism>